<keyword id="KW-0004">4Fe-4S</keyword>
<keyword id="KW-0408">Iron</keyword>
<keyword id="KW-0411">Iron-sulfur</keyword>
<keyword id="KW-0456">Lyase</keyword>
<keyword id="KW-0479">Metal-binding</keyword>
<keyword id="KW-0535">Nitrogen fixation</keyword>
<keyword id="KW-0614">Plasmid</keyword>
<keyword id="KW-0949">S-adenosyl-L-methionine</keyword>
<gene>
    <name type="primary">nifB</name>
</gene>
<reference key="1">
    <citation type="journal article" date="1989" name="Mol. Microbiol.">
        <title>Molecular linkage of the nif/fix and nod gene regions in Rhizobium leguminosarum biovar trifolii.</title>
        <authorList>
            <person name="Iismaa S.E."/>
            <person name="Ealing P.M."/>
            <person name="Scott K.F."/>
            <person name="Watson J.M."/>
        </authorList>
    </citation>
    <scope>NUCLEOTIDE SEQUENCE [GENOMIC DNA]</scope>
    <source>
        <strain>ANU 843</strain>
    </source>
</reference>
<reference key="2">
    <citation type="journal article" date="1989" name="Mol. Microbiol.">
        <title>The nifA gene product from Rhizobium leguminosarum biovar trifolii lacks the N-terminal domain found in other NifA proteins.</title>
        <authorList>
            <person name="Watson J.M."/>
            <person name="Iismaa S.E."/>
        </authorList>
    </citation>
    <scope>NUCLEOTIDE SEQUENCE [GENOMIC DNA] OF 1-153</scope>
    <source>
        <strain>ANU 843</strain>
    </source>
</reference>
<proteinExistence type="inferred from homology"/>
<evidence type="ECO:0000250" key="1">
    <source>
        <dbReference type="UniProtKB" id="D5VRM1"/>
    </source>
</evidence>
<evidence type="ECO:0000250" key="2">
    <source>
        <dbReference type="UniProtKB" id="P69848"/>
    </source>
</evidence>
<evidence type="ECO:0000255" key="3">
    <source>
        <dbReference type="PROSITE-ProRule" id="PRU01266"/>
    </source>
</evidence>
<evidence type="ECO:0000305" key="4"/>
<protein>
    <recommendedName>
        <fullName>FeMo cofactor biosynthesis protein NifB</fullName>
        <ecNumber>4.-.-.-</ecNumber>
    </recommendedName>
    <alternativeName>
        <fullName>Nitrogenase cofactor maturase NifB</fullName>
    </alternativeName>
    <alternativeName>
        <fullName>Radical SAM assemblase NifB</fullName>
    </alternativeName>
</protein>
<dbReference type="EC" id="4.-.-.-"/>
<dbReference type="EMBL" id="X51963">
    <property type="status" value="NOT_ANNOTATED_CDS"/>
    <property type="molecule type" value="Genomic_DNA"/>
</dbReference>
<dbReference type="EMBL" id="X16311">
    <property type="protein sequence ID" value="CAA34378.1"/>
    <property type="molecule type" value="Genomic_DNA"/>
</dbReference>
<dbReference type="PIR" id="S09279">
    <property type="entry name" value="S09279"/>
</dbReference>
<dbReference type="SMR" id="P24427"/>
<dbReference type="UniPathway" id="UPA00782"/>
<dbReference type="GO" id="GO:0051539">
    <property type="term" value="F:4 iron, 4 sulfur cluster binding"/>
    <property type="evidence" value="ECO:0007669"/>
    <property type="project" value="UniProtKB-KW"/>
</dbReference>
<dbReference type="GO" id="GO:0016829">
    <property type="term" value="F:lyase activity"/>
    <property type="evidence" value="ECO:0007669"/>
    <property type="project" value="UniProtKB-KW"/>
</dbReference>
<dbReference type="GO" id="GO:0046872">
    <property type="term" value="F:metal ion binding"/>
    <property type="evidence" value="ECO:0007669"/>
    <property type="project" value="UniProtKB-KW"/>
</dbReference>
<dbReference type="GO" id="GO:0009399">
    <property type="term" value="P:nitrogen fixation"/>
    <property type="evidence" value="ECO:0007669"/>
    <property type="project" value="UniProtKB-KW"/>
</dbReference>
<dbReference type="CDD" id="cd00852">
    <property type="entry name" value="NifB"/>
    <property type="match status" value="1"/>
</dbReference>
<dbReference type="CDD" id="cd01335">
    <property type="entry name" value="Radical_SAM"/>
    <property type="match status" value="1"/>
</dbReference>
<dbReference type="Gene3D" id="3.20.20.70">
    <property type="entry name" value="Aldolase class I"/>
    <property type="match status" value="1"/>
</dbReference>
<dbReference type="Gene3D" id="3.30.420.130">
    <property type="entry name" value="Dinitrogenase iron-molybdenum cofactor biosynthesis domain"/>
    <property type="match status" value="1"/>
</dbReference>
<dbReference type="InterPro" id="IPR013785">
    <property type="entry name" value="Aldolase_TIM"/>
</dbReference>
<dbReference type="InterPro" id="IPR003731">
    <property type="entry name" value="Di-Nase_FeMo-co_biosynth"/>
</dbReference>
<dbReference type="InterPro" id="IPR036105">
    <property type="entry name" value="DiNase_FeMo-co_biosyn_sf"/>
</dbReference>
<dbReference type="InterPro" id="IPR000385">
    <property type="entry name" value="MoaA_NifB_PqqE_Fe-S-bd_CS"/>
</dbReference>
<dbReference type="InterPro" id="IPR005980">
    <property type="entry name" value="Nase_CF_NifB"/>
</dbReference>
<dbReference type="InterPro" id="IPR034165">
    <property type="entry name" value="NifB_C"/>
</dbReference>
<dbReference type="InterPro" id="IPR007197">
    <property type="entry name" value="rSAM"/>
</dbReference>
<dbReference type="NCBIfam" id="TIGR01290">
    <property type="entry name" value="nifB"/>
    <property type="match status" value="1"/>
</dbReference>
<dbReference type="PANTHER" id="PTHR43787:SF13">
    <property type="entry name" value="FEMO COFACTOR BIOSYNTHESIS PROTEIN NIFB"/>
    <property type="match status" value="1"/>
</dbReference>
<dbReference type="PANTHER" id="PTHR43787">
    <property type="entry name" value="FEMO COFACTOR BIOSYNTHESIS PROTEIN NIFB-RELATED"/>
    <property type="match status" value="1"/>
</dbReference>
<dbReference type="Pfam" id="PF02579">
    <property type="entry name" value="Nitro_FeMo-Co"/>
    <property type="match status" value="1"/>
</dbReference>
<dbReference type="Pfam" id="PF04055">
    <property type="entry name" value="Radical_SAM"/>
    <property type="match status" value="1"/>
</dbReference>
<dbReference type="SFLD" id="SFLDF00281">
    <property type="entry name" value="FeMo_cofactor_biosynthesis_pro"/>
    <property type="match status" value="1"/>
</dbReference>
<dbReference type="SFLD" id="SFLDG01068">
    <property type="entry name" value="FeMo_cofactor_biosynthesis_pro"/>
    <property type="match status" value="1"/>
</dbReference>
<dbReference type="SFLD" id="SFLDG01067">
    <property type="entry name" value="SPASM/twitch_domain_containing"/>
    <property type="match status" value="1"/>
</dbReference>
<dbReference type="SUPFAM" id="SSF53146">
    <property type="entry name" value="Nitrogenase accessory factor-like"/>
    <property type="match status" value="1"/>
</dbReference>
<dbReference type="SUPFAM" id="SSF102114">
    <property type="entry name" value="Radical SAM enzymes"/>
    <property type="match status" value="1"/>
</dbReference>
<dbReference type="PROSITE" id="PS01305">
    <property type="entry name" value="MOAA_NIFB_PQQE"/>
    <property type="match status" value="1"/>
</dbReference>
<dbReference type="PROSITE" id="PS51918">
    <property type="entry name" value="RADICAL_SAM"/>
    <property type="match status" value="1"/>
</dbReference>
<geneLocation type="plasmid">
    <name>sym pRtr843e</name>
</geneLocation>
<sequence length="490" mass="53926">MSRGMSKCRITNTAPSARGWKATTFGDYAFSSRGSSEPNAMAPAIIEQIKDHPCFSREAHLYFARMHLAVASACNIQCNYCNRKYDCANESRPGVASHRLTPDQALRRAIAVANEVPQLSVVGIAGPGDACYDWRKTKATLIPIAREIPDVKLCISTNGLALPEHVDDLVDMNVGHVTITINMVDPRIGTKIYPWIFYDGRRYNGIDASRILHERQMLGLEMLTERGILAKVNSVMIPGVNDEHLIEVNKWVKDRGAFMHNVMPLISERSHGTFYGLNDQRCPATSELIALRDRLEGGTQVMRHCHQCRADAVGLLGDDRAREFTLGQFPADETYDSAKRNAYRQLIERERRGQTLEESDAATPVSAPSDELLLIAVTTKGGGRVNGHFGHAQEIQIFSVCQKGNGLIGHLKIDPYCLGGWGEEATLNTIIDALKGLDVLICSEIGKSPKNKLARRGVRATGAYDGSYIEQAIGALYRAVLHNEALATAI</sequence>
<name>NIFB_RHILT</name>
<comment type="function">
    <text evidence="1">Involved in the biosynthesis of the iron-molybdenum cofactor (FeMo-co or M-cluster) found in the dinitrogenase enzyme of the nitrogenase complex in nitrogen-fixing microorganisms. NifB catalyzes the crucial step of radical SAM-dependent carbide insertion that occurs concomitant with the insertion of a 9th sulfur and the rearrangement/coupling of two [4Fe-4S] clusters into a [8Fe-9S-C] cluster, the precursor to the M-cluster.</text>
</comment>
<comment type="cofactor">
    <cofactor evidence="1">
        <name>[4Fe-4S] cluster</name>
        <dbReference type="ChEBI" id="CHEBI:49883"/>
    </cofactor>
    <text evidence="1">Binds 3 [4Fe-4S] clusters per monomer. One cluster is coordinated with 3 cysteines and an exchangeable S-adenosyl-L-methionine. The two others probably act as substrate.</text>
</comment>
<comment type="pathway">
    <text evidence="1">Cofactor biosynthesis; Fe-Mo cofactor biosynthesis.</text>
</comment>
<comment type="similarity">
    <text evidence="4">Belongs to the radical SAM superfamily. NifB family.</text>
</comment>
<accession>P24427</accession>
<organism>
    <name type="scientific">Rhizobium leguminosarum bv. trifolii</name>
    <dbReference type="NCBI Taxonomy" id="386"/>
    <lineage>
        <taxon>Bacteria</taxon>
        <taxon>Pseudomonadati</taxon>
        <taxon>Pseudomonadota</taxon>
        <taxon>Alphaproteobacteria</taxon>
        <taxon>Hyphomicrobiales</taxon>
        <taxon>Rhizobiaceae</taxon>
        <taxon>Rhizobium/Agrobacterium group</taxon>
        <taxon>Rhizobium</taxon>
    </lineage>
</organism>
<feature type="chain" id="PRO_0000153044" description="FeMo cofactor biosynthesis protein NifB">
    <location>
        <begin position="1"/>
        <end position="490"/>
    </location>
</feature>
<feature type="domain" description="Radical SAM core" evidence="3">
    <location>
        <begin position="60"/>
        <end position="309"/>
    </location>
</feature>
<feature type="binding site" evidence="2">
    <location>
        <position position="74"/>
    </location>
    <ligand>
        <name>[4Fe-4S] cluster</name>
        <dbReference type="ChEBI" id="CHEBI:49883"/>
        <label>1</label>
        <note>4Fe-4S-S-AdoMet</note>
    </ligand>
</feature>
<feature type="binding site" evidence="2">
    <location>
        <position position="78"/>
    </location>
    <ligand>
        <name>[4Fe-4S] cluster</name>
        <dbReference type="ChEBI" id="CHEBI:49883"/>
        <label>1</label>
        <note>4Fe-4S-S-AdoMet</note>
    </ligand>
</feature>
<feature type="binding site" evidence="2">
    <location>
        <position position="80"/>
    </location>
    <ligand>
        <name>S-adenosyl-L-methionine</name>
        <dbReference type="ChEBI" id="CHEBI:59789"/>
    </ligand>
</feature>
<feature type="binding site" evidence="2">
    <location>
        <position position="81"/>
    </location>
    <ligand>
        <name>[4Fe-4S] cluster</name>
        <dbReference type="ChEBI" id="CHEBI:49883"/>
        <label>1</label>
        <note>4Fe-4S-S-AdoMet</note>
    </ligand>
</feature>
<feature type="binding site" evidence="2">
    <location>
        <position position="128"/>
    </location>
    <ligand>
        <name>S-adenosyl-L-methionine</name>
        <dbReference type="ChEBI" id="CHEBI:59789"/>
    </ligand>
</feature>
<feature type="binding site" evidence="2">
    <location>
        <position position="180"/>
    </location>
    <ligand>
        <name>S-adenosyl-L-methionine</name>
        <dbReference type="ChEBI" id="CHEBI:59789"/>
    </ligand>
</feature>
<feature type="binding site" evidence="1">
    <location>
        <position position="305"/>
    </location>
    <ligand>
        <name>[4Fe-4S] cluster</name>
        <dbReference type="ChEBI" id="CHEBI:49883"/>
        <label>2</label>
    </ligand>
</feature>
<feature type="binding site" evidence="1">
    <location>
        <position position="308"/>
    </location>
    <ligand>
        <name>[4Fe-4S] cluster</name>
        <dbReference type="ChEBI" id="CHEBI:49883"/>
        <label>2</label>
    </ligand>
</feature>